<evidence type="ECO:0000255" key="1"/>
<evidence type="ECO:0000256" key="2">
    <source>
        <dbReference type="SAM" id="MobiDB-lite"/>
    </source>
</evidence>
<evidence type="ECO:0000269" key="3">
    <source>
    </source>
</evidence>
<evidence type="ECO:0000303" key="4">
    <source>
    </source>
</evidence>
<evidence type="ECO:0000305" key="5"/>
<evidence type="ECO:0000305" key="6">
    <source>
    </source>
</evidence>
<evidence type="ECO:0000312" key="7">
    <source>
        <dbReference type="EMBL" id="CCI79383.1"/>
    </source>
</evidence>
<comment type="function">
    <text evidence="3">Antimicrobial peptide with activity against Gram-positive bacteria (S.aureus, MIC=32 mg/L) and fungi (C.albicans, MIC=128 mg/L) (PubMed:23415652). Shows weak hemolytic activity (PubMed:23415652).</text>
</comment>
<comment type="subcellular location">
    <subcellularLocation>
        <location evidence="3">Secreted</location>
    </subcellularLocation>
</comment>
<comment type="tissue specificity">
    <text evidence="6">Expressed by the skin glands.</text>
</comment>
<comment type="miscellaneous">
    <text evidence="5">The primary structure of this peptide is identical to that of Phylloseptin-s5 from Agalychnis sauvagei (AC F7UI88).</text>
</comment>
<comment type="similarity">
    <text evidence="1">Belongs to the frog skin active peptide (FSAP) family. Medusin subfamily.</text>
</comment>
<comment type="online information" name="The antimicrobial peptide database">
    <link uri="https://wangapd3.com/database/query_output.php?ID=02176"/>
</comment>
<feature type="signal peptide" evidence="1">
    <location>
        <begin position="1"/>
        <end position="22"/>
    </location>
</feature>
<feature type="propeptide" id="PRO_0000449596" evidence="6">
    <location>
        <begin position="23"/>
        <end position="48"/>
    </location>
</feature>
<feature type="peptide" id="PRO_5003946953" description="Medusin-H1" evidence="3">
    <location>
        <begin position="49"/>
        <end position="66"/>
    </location>
</feature>
<feature type="region of interest" description="Disordered" evidence="2">
    <location>
        <begin position="24"/>
        <end position="46"/>
    </location>
</feature>
<feature type="compositionally biased region" description="Acidic residues" evidence="2">
    <location>
        <begin position="31"/>
        <end position="40"/>
    </location>
</feature>
<feature type="modified residue" description="Leucine amide" evidence="3">
    <location>
        <position position="66"/>
    </location>
</feature>
<sequence>MDFLKKSLFLVLFLGFFSLSICEEEKRETEEKENEQEDDREERREEKRLLGMIPVAISAISALSKLG</sequence>
<reference key="1">
    <citation type="journal article" date="2013" name="Biochimie">
        <title>Medusins: a new class of antimicrobial peptides from the skin secretions of phyllomedusine frogs.</title>
        <authorList>
            <person name="Xi X."/>
            <person name="Li R."/>
            <person name="Jiang Y."/>
            <person name="Lin Y."/>
            <person name="Wu Y."/>
            <person name="Zhou M."/>
            <person name="Xu J."/>
            <person name="Wang L."/>
            <person name="Chen T."/>
            <person name="Shaw C."/>
        </authorList>
    </citation>
    <scope>NUCLEOTIDE SEQUENCE [MRNA]</scope>
    <scope>PROTEIN SEQUENCE OF 49-66</scope>
    <scope>FUNCTION</scope>
    <scope>AMIDATION AT LEU-66</scope>
    <scope>SUBCELLULAR LOCATION</scope>
    <scope>SYNTHESIS OF 49-66</scope>
    <source>
        <tissue>Skin secretion</tissue>
    </source>
</reference>
<organism>
    <name type="scientific">Pithecopus hypochondrialis</name>
    <name type="common">Orange-legged leaf frog</name>
    <name type="synonym">Phyllomedusa hypochondrialis</name>
    <dbReference type="NCBI Taxonomy" id="317381"/>
    <lineage>
        <taxon>Eukaryota</taxon>
        <taxon>Metazoa</taxon>
        <taxon>Chordata</taxon>
        <taxon>Craniata</taxon>
        <taxon>Vertebrata</taxon>
        <taxon>Euteleostomi</taxon>
        <taxon>Amphibia</taxon>
        <taxon>Batrachia</taxon>
        <taxon>Anura</taxon>
        <taxon>Neobatrachia</taxon>
        <taxon>Hyloidea</taxon>
        <taxon>Hylidae</taxon>
        <taxon>Phyllomedusinae</taxon>
        <taxon>Pithecopus</taxon>
    </lineage>
</organism>
<keyword id="KW-0027">Amidation</keyword>
<keyword id="KW-0878">Amphibian defense peptide</keyword>
<keyword id="KW-0044">Antibiotic</keyword>
<keyword id="KW-0929">Antimicrobial</keyword>
<keyword id="KW-0165">Cleavage on pair of basic residues</keyword>
<keyword id="KW-0204">Cytolysis</keyword>
<keyword id="KW-0903">Direct protein sequencing</keyword>
<keyword id="KW-0295">Fungicide</keyword>
<keyword id="KW-0354">Hemolysis</keyword>
<keyword id="KW-0391">Immunity</keyword>
<keyword id="KW-0399">Innate immunity</keyword>
<keyword id="KW-0964">Secreted</keyword>
<keyword id="KW-0732">Signal</keyword>
<protein>
    <recommendedName>
        <fullName evidence="5">Medusin-H1</fullName>
        <shortName evidence="5">MDS-H1</shortName>
    </recommendedName>
    <alternativeName>
        <fullName evidence="4">Medusin-PH</fullName>
    </alternativeName>
    <alternativeName>
        <fullName evidence="7">Phyllin-PH</fullName>
    </alternativeName>
</protein>
<dbReference type="EMBL" id="HE863820">
    <property type="protein sequence ID" value="CCI79383.1"/>
    <property type="molecule type" value="mRNA"/>
</dbReference>
<dbReference type="GO" id="GO:0005576">
    <property type="term" value="C:extracellular region"/>
    <property type="evidence" value="ECO:0007669"/>
    <property type="project" value="UniProtKB-SubCell"/>
</dbReference>
<dbReference type="GO" id="GO:0042742">
    <property type="term" value="P:defense response to bacterium"/>
    <property type="evidence" value="ECO:0007669"/>
    <property type="project" value="UniProtKB-KW"/>
</dbReference>
<dbReference type="GO" id="GO:0050832">
    <property type="term" value="P:defense response to fungus"/>
    <property type="evidence" value="ECO:0007669"/>
    <property type="project" value="UniProtKB-KW"/>
</dbReference>
<dbReference type="GO" id="GO:0045087">
    <property type="term" value="P:innate immune response"/>
    <property type="evidence" value="ECO:0007669"/>
    <property type="project" value="UniProtKB-KW"/>
</dbReference>
<dbReference type="GO" id="GO:0031640">
    <property type="term" value="P:killing of cells of another organism"/>
    <property type="evidence" value="ECO:0007669"/>
    <property type="project" value="UniProtKB-KW"/>
</dbReference>
<dbReference type="InterPro" id="IPR004275">
    <property type="entry name" value="Frog_antimicrobial_propeptide"/>
</dbReference>
<dbReference type="Pfam" id="PF03032">
    <property type="entry name" value="FSAP_sig_propep"/>
    <property type="match status" value="1"/>
</dbReference>
<name>MDS_PITHY</name>
<accession>L0P402</accession>
<proteinExistence type="evidence at protein level"/>